<protein>
    <recommendedName>
        <fullName evidence="1">Small ribosomal subunit protein uS15</fullName>
    </recommendedName>
    <alternativeName>
        <fullName evidence="2">30S ribosomal protein S15</fullName>
    </alternativeName>
</protein>
<reference key="1">
    <citation type="journal article" date="2007" name="J. Bacteriol.">
        <title>The complete genome sequence of the lactic acid bacterial paradigm Lactococcus lactis subsp. cremoris MG1363.</title>
        <authorList>
            <person name="Wegmann U."/>
            <person name="O'Connell-Motherway M."/>
            <person name="Zomer A."/>
            <person name="Buist G."/>
            <person name="Shearman C."/>
            <person name="Canchaya C."/>
            <person name="Ventura M."/>
            <person name="Goesmann A."/>
            <person name="Gasson M.J."/>
            <person name="Kuipers O.P."/>
            <person name="van Sinderen D."/>
            <person name="Kok J."/>
        </authorList>
    </citation>
    <scope>NUCLEOTIDE SEQUENCE [LARGE SCALE GENOMIC DNA]</scope>
    <source>
        <strain>MG1363</strain>
    </source>
</reference>
<dbReference type="EMBL" id="AM406671">
    <property type="protein sequence ID" value="CAL98645.1"/>
    <property type="status" value="ALT_INIT"/>
    <property type="molecule type" value="Genomic_DNA"/>
</dbReference>
<dbReference type="RefSeq" id="WP_010906184.1">
    <property type="nucleotide sequence ID" value="NZ_WJVF01000004.1"/>
</dbReference>
<dbReference type="PDB" id="5MYJ">
    <property type="method" value="EM"/>
    <property type="resolution" value="5.60 A"/>
    <property type="chains" value="AO=1-89"/>
</dbReference>
<dbReference type="PDBsum" id="5MYJ"/>
<dbReference type="EMDB" id="EMD-3581"/>
<dbReference type="SMR" id="A2RMV9"/>
<dbReference type="STRING" id="416870.llmg_2078"/>
<dbReference type="GeneID" id="61110216"/>
<dbReference type="KEGG" id="llm:llmg_2078"/>
<dbReference type="eggNOG" id="COG0184">
    <property type="taxonomic scope" value="Bacteria"/>
</dbReference>
<dbReference type="HOGENOM" id="CLU_148518_0_0_9"/>
<dbReference type="OrthoDB" id="9799262at2"/>
<dbReference type="Proteomes" id="UP000000364">
    <property type="component" value="Chromosome"/>
</dbReference>
<dbReference type="GO" id="GO:0022627">
    <property type="term" value="C:cytosolic small ribosomal subunit"/>
    <property type="evidence" value="ECO:0007669"/>
    <property type="project" value="TreeGrafter"/>
</dbReference>
<dbReference type="GO" id="GO:0019843">
    <property type="term" value="F:rRNA binding"/>
    <property type="evidence" value="ECO:0007669"/>
    <property type="project" value="UniProtKB-UniRule"/>
</dbReference>
<dbReference type="GO" id="GO:0003735">
    <property type="term" value="F:structural constituent of ribosome"/>
    <property type="evidence" value="ECO:0007669"/>
    <property type="project" value="InterPro"/>
</dbReference>
<dbReference type="GO" id="GO:0006412">
    <property type="term" value="P:translation"/>
    <property type="evidence" value="ECO:0007669"/>
    <property type="project" value="UniProtKB-UniRule"/>
</dbReference>
<dbReference type="CDD" id="cd00353">
    <property type="entry name" value="Ribosomal_S15p_S13e"/>
    <property type="match status" value="1"/>
</dbReference>
<dbReference type="FunFam" id="1.10.287.10:FF:000002">
    <property type="entry name" value="30S ribosomal protein S15"/>
    <property type="match status" value="1"/>
</dbReference>
<dbReference type="Gene3D" id="6.10.250.3130">
    <property type="match status" value="1"/>
</dbReference>
<dbReference type="Gene3D" id="1.10.287.10">
    <property type="entry name" value="S15/NS1, RNA-binding"/>
    <property type="match status" value="1"/>
</dbReference>
<dbReference type="HAMAP" id="MF_01343_B">
    <property type="entry name" value="Ribosomal_uS15_B"/>
    <property type="match status" value="1"/>
</dbReference>
<dbReference type="InterPro" id="IPR000589">
    <property type="entry name" value="Ribosomal_uS15"/>
</dbReference>
<dbReference type="InterPro" id="IPR005290">
    <property type="entry name" value="Ribosomal_uS15_bac-type"/>
</dbReference>
<dbReference type="InterPro" id="IPR009068">
    <property type="entry name" value="uS15_NS1_RNA-bd_sf"/>
</dbReference>
<dbReference type="NCBIfam" id="TIGR00952">
    <property type="entry name" value="S15_bact"/>
    <property type="match status" value="1"/>
</dbReference>
<dbReference type="PANTHER" id="PTHR23321">
    <property type="entry name" value="RIBOSOMAL PROTEIN S15, BACTERIAL AND ORGANELLAR"/>
    <property type="match status" value="1"/>
</dbReference>
<dbReference type="PANTHER" id="PTHR23321:SF26">
    <property type="entry name" value="SMALL RIBOSOMAL SUBUNIT PROTEIN US15M"/>
    <property type="match status" value="1"/>
</dbReference>
<dbReference type="Pfam" id="PF00312">
    <property type="entry name" value="Ribosomal_S15"/>
    <property type="match status" value="1"/>
</dbReference>
<dbReference type="SMART" id="SM01387">
    <property type="entry name" value="Ribosomal_S15"/>
    <property type="match status" value="1"/>
</dbReference>
<dbReference type="SUPFAM" id="SSF47060">
    <property type="entry name" value="S15/NS1 RNA-binding domain"/>
    <property type="match status" value="1"/>
</dbReference>
<dbReference type="PROSITE" id="PS00362">
    <property type="entry name" value="RIBOSOMAL_S15"/>
    <property type="match status" value="1"/>
</dbReference>
<keyword id="KW-0002">3D-structure</keyword>
<keyword id="KW-0687">Ribonucleoprotein</keyword>
<keyword id="KW-0689">Ribosomal protein</keyword>
<keyword id="KW-0694">RNA-binding</keyword>
<keyword id="KW-0699">rRNA-binding</keyword>
<sequence length="89" mass="10343">MAISKEKKQEIIAQYARKEGDTGSPEVQIAVLTWEINHLNDHIKSHKKDHATQRGLMKKIGHRRNLLGYLRGKDVQRYRELIASLGLRR</sequence>
<gene>
    <name evidence="1" type="primary">rpsO</name>
    <name type="ordered locus">llmg_2078</name>
</gene>
<name>RS15_LACLM</name>
<proteinExistence type="evidence at protein level"/>
<evidence type="ECO:0000255" key="1">
    <source>
        <dbReference type="HAMAP-Rule" id="MF_01343"/>
    </source>
</evidence>
<evidence type="ECO:0000305" key="2"/>
<comment type="function">
    <text evidence="1">One of the primary rRNA binding proteins, it binds directly to 16S rRNA where it helps nucleate assembly of the platform of the 30S subunit by binding and bridging several RNA helices of the 16S rRNA.</text>
</comment>
<comment type="function">
    <text evidence="1">Forms an intersubunit bridge (bridge B4) with the 23S rRNA of the 50S subunit in the ribosome.</text>
</comment>
<comment type="subunit">
    <text evidence="1">Part of the 30S ribosomal subunit. Forms a bridge to the 50S subunit in the 70S ribosome, contacting the 23S rRNA.</text>
</comment>
<comment type="similarity">
    <text evidence="1">Belongs to the universal ribosomal protein uS15 family.</text>
</comment>
<comment type="sequence caution" evidence="2">
    <conflict type="erroneous initiation">
        <sequence resource="EMBL-CDS" id="CAL98645"/>
    </conflict>
</comment>
<organism>
    <name type="scientific">Lactococcus lactis subsp. cremoris (strain MG1363)</name>
    <dbReference type="NCBI Taxonomy" id="416870"/>
    <lineage>
        <taxon>Bacteria</taxon>
        <taxon>Bacillati</taxon>
        <taxon>Bacillota</taxon>
        <taxon>Bacilli</taxon>
        <taxon>Lactobacillales</taxon>
        <taxon>Streptococcaceae</taxon>
        <taxon>Lactococcus</taxon>
        <taxon>Lactococcus cremoris subsp. cremoris</taxon>
    </lineage>
</organism>
<feature type="chain" id="PRO_0000354202" description="Small ribosomal subunit protein uS15">
    <location>
        <begin position="1"/>
        <end position="89"/>
    </location>
</feature>
<accession>A2RMV9</accession>